<gene>
    <name type="primary">TCEA2</name>
</gene>
<comment type="function">
    <text evidence="1">Necessary for efficient RNA polymerase II transcription elongation past template-encoded arresting sites. The arresting sites in DNA have the property of trapping a certain fraction of elongating RNA polymerases that pass through, resulting in locked ternary complexes. Cleavage of the nascent transcript by S-II allows the resumption of elongation from the new 3'-terminus (By similarity).</text>
</comment>
<comment type="subunit">
    <text evidence="1">Interacts with the basal transcription factor GTF2B. Interacts with REXO1 (By similarity).</text>
</comment>
<comment type="subcellular location">
    <subcellularLocation>
        <location evidence="5 6">Nucleus</location>
    </subcellularLocation>
</comment>
<comment type="similarity">
    <text evidence="8">Belongs to the TFS-II family.</text>
</comment>
<comment type="caution">
    <text evidence="8">It is uncertain whether Met-1 or Met-2 is the initiator.</text>
</comment>
<organism>
    <name type="scientific">Bos taurus</name>
    <name type="common">Bovine</name>
    <dbReference type="NCBI Taxonomy" id="9913"/>
    <lineage>
        <taxon>Eukaryota</taxon>
        <taxon>Metazoa</taxon>
        <taxon>Chordata</taxon>
        <taxon>Craniata</taxon>
        <taxon>Vertebrata</taxon>
        <taxon>Euteleostomi</taxon>
        <taxon>Mammalia</taxon>
        <taxon>Eutheria</taxon>
        <taxon>Laurasiatheria</taxon>
        <taxon>Artiodactyla</taxon>
        <taxon>Ruminantia</taxon>
        <taxon>Pecora</taxon>
        <taxon>Bovidae</taxon>
        <taxon>Bovinae</taxon>
        <taxon>Bos</taxon>
    </lineage>
</organism>
<feature type="chain" id="PRO_0000285503" description="Transcription elongation factor A protein 2">
    <location>
        <begin position="1"/>
        <end position="300"/>
    </location>
</feature>
<feature type="domain" description="TFIIS N-terminal" evidence="5">
    <location>
        <begin position="6"/>
        <end position="83"/>
    </location>
</feature>
<feature type="domain" description="TFIIS central" evidence="6">
    <location>
        <begin position="139"/>
        <end position="255"/>
    </location>
</feature>
<feature type="zinc finger region" description="TFIIS-type" evidence="4">
    <location>
        <begin position="258"/>
        <end position="298"/>
    </location>
</feature>
<feature type="region of interest" description="Disordered" evidence="7">
    <location>
        <begin position="84"/>
        <end position="131"/>
    </location>
</feature>
<feature type="compositionally biased region" description="Basic and acidic residues" evidence="7">
    <location>
        <begin position="103"/>
        <end position="117"/>
    </location>
</feature>
<feature type="binding site" evidence="4">
    <location>
        <position position="262"/>
    </location>
    <ligand>
        <name>Zn(2+)</name>
        <dbReference type="ChEBI" id="CHEBI:29105"/>
    </ligand>
</feature>
<feature type="binding site" evidence="4">
    <location>
        <position position="265"/>
    </location>
    <ligand>
        <name>Zn(2+)</name>
        <dbReference type="ChEBI" id="CHEBI:29105"/>
    </ligand>
</feature>
<feature type="binding site" evidence="4">
    <location>
        <position position="290"/>
    </location>
    <ligand>
        <name>Zn(2+)</name>
        <dbReference type="ChEBI" id="CHEBI:29105"/>
    </ligand>
</feature>
<feature type="binding site" evidence="4">
    <location>
        <position position="293"/>
    </location>
    <ligand>
        <name>Zn(2+)</name>
        <dbReference type="ChEBI" id="CHEBI:29105"/>
    </ligand>
</feature>
<feature type="modified residue" description="Phosphoserine" evidence="2">
    <location>
        <position position="60"/>
    </location>
</feature>
<feature type="modified residue" description="Phosphoserine" evidence="2">
    <location>
        <position position="101"/>
    </location>
</feature>
<feature type="cross-link" description="Glycyl lysine isopeptide (Lys-Gly) (interchain with G-Cter in ubiquitin)" evidence="3">
    <location>
        <position position="58"/>
    </location>
</feature>
<reference key="1">
    <citation type="submission" date="2006-06" db="EMBL/GenBank/DDBJ databases">
        <authorList>
            <consortium name="NIH - Mammalian Gene Collection (MGC) project"/>
        </authorList>
    </citation>
    <scope>NUCLEOTIDE SEQUENCE [LARGE SCALE MRNA]</scope>
    <source>
        <strain>Hereford</strain>
        <tissue>Thalamus</tissue>
    </source>
</reference>
<protein>
    <recommendedName>
        <fullName>Transcription elongation factor A protein 2</fullName>
    </recommendedName>
    <alternativeName>
        <fullName>Transcription elongation factor S-II protein 2</fullName>
    </alternativeName>
</protein>
<keyword id="KW-0238">DNA-binding</keyword>
<keyword id="KW-1017">Isopeptide bond</keyword>
<keyword id="KW-0479">Metal-binding</keyword>
<keyword id="KW-0539">Nucleus</keyword>
<keyword id="KW-0597">Phosphoprotein</keyword>
<keyword id="KW-1185">Reference proteome</keyword>
<keyword id="KW-0804">Transcription</keyword>
<keyword id="KW-0805">Transcription regulation</keyword>
<keyword id="KW-0832">Ubl conjugation</keyword>
<keyword id="KW-0862">Zinc</keyword>
<keyword id="KW-0863">Zinc-finger</keyword>
<evidence type="ECO:0000250" key="1"/>
<evidence type="ECO:0000250" key="2">
    <source>
        <dbReference type="UniProtKB" id="P23193"/>
    </source>
</evidence>
<evidence type="ECO:0000250" key="3">
    <source>
        <dbReference type="UniProtKB" id="Q15560"/>
    </source>
</evidence>
<evidence type="ECO:0000255" key="4">
    <source>
        <dbReference type="PROSITE-ProRule" id="PRU00472"/>
    </source>
</evidence>
<evidence type="ECO:0000255" key="5">
    <source>
        <dbReference type="PROSITE-ProRule" id="PRU00649"/>
    </source>
</evidence>
<evidence type="ECO:0000255" key="6">
    <source>
        <dbReference type="PROSITE-ProRule" id="PRU00651"/>
    </source>
</evidence>
<evidence type="ECO:0000256" key="7">
    <source>
        <dbReference type="SAM" id="MobiDB-lite"/>
    </source>
</evidence>
<evidence type="ECO:0000305" key="8"/>
<proteinExistence type="evidence at transcript level"/>
<accession>Q148K0</accession>
<name>TCEA2_BOVIN</name>
<sequence>MMGKEEEIARIARRLDKMVTKKSAEGAMDLLRELKAMPVTLHLLQSTRVGMSVNALRKQSSDEEVVTLAKSLIKSWKKLLDASDAKARERRRGGSLPTSSSKEASEAQDPSRKRPELPRMPSTPRITTFPPVPVTCDAVRTKCREMLTAALQTDHDHVAIGADCECLAGQIEECIFRDVGNTDMKYKNRVRSRLSNLKDAKNPGLRRKVLCGAITPQQIAVMTSEEMASDELKEIRKAMTKEAIREHQMARTGGTQTDLFTCGKCRKKNCTYTQVQTRSSDEPMTTFVVCNECGNRWKFC</sequence>
<dbReference type="EMBL" id="BC118232">
    <property type="protein sequence ID" value="AAI18233.1"/>
    <property type="molecule type" value="mRNA"/>
</dbReference>
<dbReference type="RefSeq" id="NP_001068797.1">
    <property type="nucleotide sequence ID" value="NM_001075329.1"/>
</dbReference>
<dbReference type="SMR" id="Q148K0"/>
<dbReference type="FunCoup" id="Q148K0">
    <property type="interactions" value="2781"/>
</dbReference>
<dbReference type="STRING" id="9913.ENSBTAP00000029107"/>
<dbReference type="PaxDb" id="9913-ENSBTAP00000029107"/>
<dbReference type="GeneID" id="507729"/>
<dbReference type="KEGG" id="bta:507729"/>
<dbReference type="CTD" id="6919"/>
<dbReference type="eggNOG" id="KOG1105">
    <property type="taxonomic scope" value="Eukaryota"/>
</dbReference>
<dbReference type="InParanoid" id="Q148K0"/>
<dbReference type="OrthoDB" id="44867at2759"/>
<dbReference type="Proteomes" id="UP000009136">
    <property type="component" value="Unplaced"/>
</dbReference>
<dbReference type="GO" id="GO:0005634">
    <property type="term" value="C:nucleus"/>
    <property type="evidence" value="ECO:0000318"/>
    <property type="project" value="GO_Central"/>
</dbReference>
<dbReference type="GO" id="GO:0003677">
    <property type="term" value="F:DNA binding"/>
    <property type="evidence" value="ECO:0007669"/>
    <property type="project" value="UniProtKB-KW"/>
</dbReference>
<dbReference type="GO" id="GO:0008270">
    <property type="term" value="F:zinc ion binding"/>
    <property type="evidence" value="ECO:0007669"/>
    <property type="project" value="UniProtKB-KW"/>
</dbReference>
<dbReference type="GO" id="GO:0006357">
    <property type="term" value="P:regulation of transcription by RNA polymerase II"/>
    <property type="evidence" value="ECO:0000318"/>
    <property type="project" value="GO_Central"/>
</dbReference>
<dbReference type="GO" id="GO:0006368">
    <property type="term" value="P:transcription elongation by RNA polymerase II"/>
    <property type="evidence" value="ECO:0007669"/>
    <property type="project" value="InterPro"/>
</dbReference>
<dbReference type="CDD" id="cd00183">
    <property type="entry name" value="TFIIS_I"/>
    <property type="match status" value="1"/>
</dbReference>
<dbReference type="CDD" id="cd13749">
    <property type="entry name" value="Zn-ribbon_TFIIS"/>
    <property type="match status" value="1"/>
</dbReference>
<dbReference type="FunFam" id="2.20.25.10:FF:000001">
    <property type="entry name" value="Probable Transcription elongation factor S-II"/>
    <property type="match status" value="1"/>
</dbReference>
<dbReference type="FunFam" id="1.20.930.10:FF:000002">
    <property type="entry name" value="Transcription elongation factor A (SII), 1"/>
    <property type="match status" value="1"/>
</dbReference>
<dbReference type="Gene3D" id="2.20.25.10">
    <property type="match status" value="1"/>
</dbReference>
<dbReference type="Gene3D" id="1.20.930.10">
    <property type="entry name" value="Conserved domain common to transcription factors TFIIS, elongin A, CRSP70"/>
    <property type="match status" value="1"/>
</dbReference>
<dbReference type="Gene3D" id="1.10.472.30">
    <property type="entry name" value="Transcription elongation factor S-II, central domain"/>
    <property type="match status" value="1"/>
</dbReference>
<dbReference type="InterPro" id="IPR035100">
    <property type="entry name" value="TF_IIS-typ"/>
</dbReference>
<dbReference type="InterPro" id="IPR003617">
    <property type="entry name" value="TFIIS/CRSP70_N_sub"/>
</dbReference>
<dbReference type="InterPro" id="IPR035441">
    <property type="entry name" value="TFIIS/LEDGF_dom_sf"/>
</dbReference>
<dbReference type="InterPro" id="IPR003618">
    <property type="entry name" value="TFIIS_cen_dom"/>
</dbReference>
<dbReference type="InterPro" id="IPR036575">
    <property type="entry name" value="TFIIS_cen_dom_sf"/>
</dbReference>
<dbReference type="InterPro" id="IPR017923">
    <property type="entry name" value="TFIIS_N"/>
</dbReference>
<dbReference type="InterPro" id="IPR006289">
    <property type="entry name" value="TFSII"/>
</dbReference>
<dbReference type="InterPro" id="IPR001222">
    <property type="entry name" value="Znf_TFIIS"/>
</dbReference>
<dbReference type="NCBIfam" id="TIGR01385">
    <property type="entry name" value="TFSII"/>
    <property type="match status" value="1"/>
</dbReference>
<dbReference type="PANTHER" id="PTHR11477:SF3">
    <property type="entry name" value="TRANSCRIPTION ELONGATION FACTOR A PROTEIN 2"/>
    <property type="match status" value="1"/>
</dbReference>
<dbReference type="PANTHER" id="PTHR11477">
    <property type="entry name" value="TRANSCRIPTION FACTOR S-II ZINC FINGER DOMAIN-CONTAINING PROTEIN"/>
    <property type="match status" value="1"/>
</dbReference>
<dbReference type="Pfam" id="PF08711">
    <property type="entry name" value="Med26"/>
    <property type="match status" value="1"/>
</dbReference>
<dbReference type="Pfam" id="PF07500">
    <property type="entry name" value="TFIIS_M"/>
    <property type="match status" value="1"/>
</dbReference>
<dbReference type="Pfam" id="PF01096">
    <property type="entry name" value="Zn_ribbon_TFIIS"/>
    <property type="match status" value="1"/>
</dbReference>
<dbReference type="PIRSF" id="PIRSF006704">
    <property type="entry name" value="TF_IIS"/>
    <property type="match status" value="1"/>
</dbReference>
<dbReference type="SMART" id="SM00510">
    <property type="entry name" value="TFS2M"/>
    <property type="match status" value="1"/>
</dbReference>
<dbReference type="SMART" id="SM00509">
    <property type="entry name" value="TFS2N"/>
    <property type="match status" value="1"/>
</dbReference>
<dbReference type="SMART" id="SM00440">
    <property type="entry name" value="ZnF_C2C2"/>
    <property type="match status" value="1"/>
</dbReference>
<dbReference type="SUPFAM" id="SSF47676">
    <property type="entry name" value="Conserved domain common to transcription factors TFIIS, elongin A, CRSP70"/>
    <property type="match status" value="1"/>
</dbReference>
<dbReference type="SUPFAM" id="SSF46942">
    <property type="entry name" value="Elongation factor TFIIS domain 2"/>
    <property type="match status" value="1"/>
</dbReference>
<dbReference type="SUPFAM" id="SSF57783">
    <property type="entry name" value="Zinc beta-ribbon"/>
    <property type="match status" value="1"/>
</dbReference>
<dbReference type="PROSITE" id="PS51321">
    <property type="entry name" value="TFIIS_CENTRAL"/>
    <property type="match status" value="1"/>
</dbReference>
<dbReference type="PROSITE" id="PS51319">
    <property type="entry name" value="TFIIS_N"/>
    <property type="match status" value="1"/>
</dbReference>
<dbReference type="PROSITE" id="PS00466">
    <property type="entry name" value="ZF_TFIIS_1"/>
    <property type="match status" value="1"/>
</dbReference>
<dbReference type="PROSITE" id="PS51133">
    <property type="entry name" value="ZF_TFIIS_2"/>
    <property type="match status" value="1"/>
</dbReference>